<protein>
    <recommendedName>
        <fullName evidence="1">A-type ATP synthase subunit E</fullName>
    </recommendedName>
</protein>
<feature type="chain" id="PRO_0000117315" description="A-type ATP synthase subunit E">
    <location>
        <begin position="1"/>
        <end position="183"/>
    </location>
</feature>
<keyword id="KW-0066">ATP synthesis</keyword>
<keyword id="KW-1003">Cell membrane</keyword>
<keyword id="KW-0375">Hydrogen ion transport</keyword>
<keyword id="KW-0406">Ion transport</keyword>
<keyword id="KW-0472">Membrane</keyword>
<keyword id="KW-1185">Reference proteome</keyword>
<keyword id="KW-0813">Transport</keyword>
<sequence length="183" mass="20485">MGLEIVIKDIQEGARAEVSRINTEADAKASEITNEAKEVQKKMLGDSLAKVEEDLQKLHQQVISSANLEVKRITLNKRKELLDNVYSQTVESIKSMPASKNEKLLKHIIDKYEASGDKIYSSKASEETVRKLSSLTYAGNIDCIGGVVLENEDGTVRLDYTYDSILKNVYERSLKQISDILYG</sequence>
<gene>
    <name evidence="1" type="primary">atpE</name>
    <name type="ordered locus">MA_4155</name>
</gene>
<organism>
    <name type="scientific">Methanosarcina acetivorans (strain ATCC 35395 / DSM 2834 / JCM 12185 / C2A)</name>
    <dbReference type="NCBI Taxonomy" id="188937"/>
    <lineage>
        <taxon>Archaea</taxon>
        <taxon>Methanobacteriati</taxon>
        <taxon>Methanobacteriota</taxon>
        <taxon>Stenosarchaea group</taxon>
        <taxon>Methanomicrobia</taxon>
        <taxon>Methanosarcinales</taxon>
        <taxon>Methanosarcinaceae</taxon>
        <taxon>Methanosarcina</taxon>
    </lineage>
</organism>
<accession>Q8TIJ4</accession>
<comment type="function">
    <text evidence="1">Component of the A-type ATP synthase that produces ATP from ADP in the presence of a proton gradient across the membrane.</text>
</comment>
<comment type="subunit">
    <text evidence="1">Has multiple subunits with at least A(3), B(3), C, D, E, F, H, I and proteolipid K(x).</text>
</comment>
<comment type="subcellular location">
    <subcellularLocation>
        <location evidence="1">Cell membrane</location>
        <topology evidence="1">Peripheral membrane protein</topology>
    </subcellularLocation>
</comment>
<comment type="similarity">
    <text evidence="1">Belongs to the V-ATPase E subunit family.</text>
</comment>
<name>AATE_METAC</name>
<reference key="1">
    <citation type="journal article" date="2002" name="Genome Res.">
        <title>The genome of Methanosarcina acetivorans reveals extensive metabolic and physiological diversity.</title>
        <authorList>
            <person name="Galagan J.E."/>
            <person name="Nusbaum C."/>
            <person name="Roy A."/>
            <person name="Endrizzi M.G."/>
            <person name="Macdonald P."/>
            <person name="FitzHugh W."/>
            <person name="Calvo S."/>
            <person name="Engels R."/>
            <person name="Smirnov S."/>
            <person name="Atnoor D."/>
            <person name="Brown A."/>
            <person name="Allen N."/>
            <person name="Naylor J."/>
            <person name="Stange-Thomann N."/>
            <person name="DeArellano K."/>
            <person name="Johnson R."/>
            <person name="Linton L."/>
            <person name="McEwan P."/>
            <person name="McKernan K."/>
            <person name="Talamas J."/>
            <person name="Tirrell A."/>
            <person name="Ye W."/>
            <person name="Zimmer A."/>
            <person name="Barber R.D."/>
            <person name="Cann I."/>
            <person name="Graham D.E."/>
            <person name="Grahame D.A."/>
            <person name="Guss A.M."/>
            <person name="Hedderich R."/>
            <person name="Ingram-Smith C."/>
            <person name="Kuettner H.C."/>
            <person name="Krzycki J.A."/>
            <person name="Leigh J.A."/>
            <person name="Li W."/>
            <person name="Liu J."/>
            <person name="Mukhopadhyay B."/>
            <person name="Reeve J.N."/>
            <person name="Smith K."/>
            <person name="Springer T.A."/>
            <person name="Umayam L.A."/>
            <person name="White O."/>
            <person name="White R.H."/>
            <person name="de Macario E.C."/>
            <person name="Ferry J.G."/>
            <person name="Jarrell K.F."/>
            <person name="Jing H."/>
            <person name="Macario A.J.L."/>
            <person name="Paulsen I.T."/>
            <person name="Pritchett M."/>
            <person name="Sowers K.R."/>
            <person name="Swanson R.V."/>
            <person name="Zinder S.H."/>
            <person name="Lander E."/>
            <person name="Metcalf W.W."/>
            <person name="Birren B."/>
        </authorList>
    </citation>
    <scope>NUCLEOTIDE SEQUENCE [LARGE SCALE GENOMIC DNA]</scope>
    <source>
        <strain>ATCC 35395 / DSM 2834 / JCM 12185 / C2A</strain>
    </source>
</reference>
<proteinExistence type="inferred from homology"/>
<dbReference type="EMBL" id="AE010299">
    <property type="protein sequence ID" value="AAM07503.1"/>
    <property type="molecule type" value="Genomic_DNA"/>
</dbReference>
<dbReference type="RefSeq" id="WP_011024043.1">
    <property type="nucleotide sequence ID" value="NC_003552.1"/>
</dbReference>
<dbReference type="SMR" id="Q8TIJ4"/>
<dbReference type="STRING" id="188937.MA_4155"/>
<dbReference type="EnsemblBacteria" id="AAM07503">
    <property type="protein sequence ID" value="AAM07503"/>
    <property type="gene ID" value="MA_4155"/>
</dbReference>
<dbReference type="GeneID" id="1476049"/>
<dbReference type="KEGG" id="mac:MA_4155"/>
<dbReference type="HOGENOM" id="CLU_120786_0_0_2"/>
<dbReference type="InParanoid" id="Q8TIJ4"/>
<dbReference type="OrthoDB" id="4691at2157"/>
<dbReference type="PhylomeDB" id="Q8TIJ4"/>
<dbReference type="Proteomes" id="UP000002487">
    <property type="component" value="Chromosome"/>
</dbReference>
<dbReference type="GO" id="GO:0005886">
    <property type="term" value="C:plasma membrane"/>
    <property type="evidence" value="ECO:0007669"/>
    <property type="project" value="UniProtKB-SubCell"/>
</dbReference>
<dbReference type="GO" id="GO:0033178">
    <property type="term" value="C:proton-transporting two-sector ATPase complex, catalytic domain"/>
    <property type="evidence" value="ECO:0007669"/>
    <property type="project" value="InterPro"/>
</dbReference>
<dbReference type="GO" id="GO:0005524">
    <property type="term" value="F:ATP binding"/>
    <property type="evidence" value="ECO:0007669"/>
    <property type="project" value="UniProtKB-UniRule"/>
</dbReference>
<dbReference type="GO" id="GO:0046933">
    <property type="term" value="F:proton-transporting ATP synthase activity, rotational mechanism"/>
    <property type="evidence" value="ECO:0007669"/>
    <property type="project" value="UniProtKB-UniRule"/>
</dbReference>
<dbReference type="GO" id="GO:0046961">
    <property type="term" value="F:proton-transporting ATPase activity, rotational mechanism"/>
    <property type="evidence" value="ECO:0007669"/>
    <property type="project" value="InterPro"/>
</dbReference>
<dbReference type="GO" id="GO:0042777">
    <property type="term" value="P:proton motive force-driven plasma membrane ATP synthesis"/>
    <property type="evidence" value="ECO:0007669"/>
    <property type="project" value="UniProtKB-UniRule"/>
</dbReference>
<dbReference type="Gene3D" id="3.30.2320.30">
    <property type="entry name" value="ATP synthase, E subunit, C-terminal"/>
    <property type="match status" value="1"/>
</dbReference>
<dbReference type="HAMAP" id="MF_00311">
    <property type="entry name" value="ATP_synth_E_arch"/>
    <property type="match status" value="1"/>
</dbReference>
<dbReference type="InterPro" id="IPR038495">
    <property type="entry name" value="ATPase_E_C"/>
</dbReference>
<dbReference type="InterPro" id="IPR002842">
    <property type="entry name" value="ATPase_V1_Esu"/>
</dbReference>
<dbReference type="NCBIfam" id="NF002629">
    <property type="entry name" value="PRK02292.1"/>
    <property type="match status" value="1"/>
</dbReference>
<dbReference type="Pfam" id="PF01991">
    <property type="entry name" value="vATP-synt_E"/>
    <property type="match status" value="1"/>
</dbReference>
<dbReference type="SUPFAM" id="SSF160527">
    <property type="entry name" value="V-type ATPase subunit E-like"/>
    <property type="match status" value="1"/>
</dbReference>
<evidence type="ECO:0000255" key="1">
    <source>
        <dbReference type="HAMAP-Rule" id="MF_00311"/>
    </source>
</evidence>